<feature type="chain" id="PRO_1000131627" description="UPF0260 protein RHECIAT_CH0001358">
    <location>
        <begin position="1"/>
        <end position="158"/>
    </location>
</feature>
<dbReference type="EMBL" id="CP001074">
    <property type="protein sequence ID" value="ACE90339.1"/>
    <property type="molecule type" value="Genomic_DNA"/>
</dbReference>
<dbReference type="KEGG" id="rec:RHECIAT_CH0001358"/>
<dbReference type="eggNOG" id="COG2983">
    <property type="taxonomic scope" value="Bacteria"/>
</dbReference>
<dbReference type="HOGENOM" id="CLU_109769_0_1_5"/>
<dbReference type="Proteomes" id="UP000008817">
    <property type="component" value="Chromosome"/>
</dbReference>
<dbReference type="HAMAP" id="MF_00676">
    <property type="entry name" value="UPF0260"/>
    <property type="match status" value="1"/>
</dbReference>
<dbReference type="InterPro" id="IPR005358">
    <property type="entry name" value="Puta_zinc/iron-chelating_dom"/>
</dbReference>
<dbReference type="InterPro" id="IPR008228">
    <property type="entry name" value="UCP006173"/>
</dbReference>
<dbReference type="NCBIfam" id="NF003501">
    <property type="entry name" value="PRK05170.1-5"/>
    <property type="match status" value="1"/>
</dbReference>
<dbReference type="NCBIfam" id="NF003507">
    <property type="entry name" value="PRK05170.2-5"/>
    <property type="match status" value="1"/>
</dbReference>
<dbReference type="PANTHER" id="PTHR37421">
    <property type="entry name" value="UPF0260 PROTEIN YCGN"/>
    <property type="match status" value="1"/>
</dbReference>
<dbReference type="PANTHER" id="PTHR37421:SF1">
    <property type="entry name" value="UPF0260 PROTEIN YCGN"/>
    <property type="match status" value="1"/>
</dbReference>
<dbReference type="Pfam" id="PF03692">
    <property type="entry name" value="CxxCxxCC"/>
    <property type="match status" value="1"/>
</dbReference>
<dbReference type="PIRSF" id="PIRSF006173">
    <property type="entry name" value="UCP006173"/>
    <property type="match status" value="1"/>
</dbReference>
<protein>
    <recommendedName>
        <fullName evidence="1">UPF0260 protein RHECIAT_CH0001358</fullName>
    </recommendedName>
</protein>
<reference key="1">
    <citation type="journal article" date="2010" name="Appl. Environ. Microbiol.">
        <title>Conserved symbiotic plasmid DNA sequences in the multireplicon pangenomic structure of Rhizobium etli.</title>
        <authorList>
            <person name="Gonzalez V."/>
            <person name="Acosta J.L."/>
            <person name="Santamaria R.I."/>
            <person name="Bustos P."/>
            <person name="Fernandez J.L."/>
            <person name="Hernandez Gonzalez I.L."/>
            <person name="Diaz R."/>
            <person name="Flores M."/>
            <person name="Palacios R."/>
            <person name="Mora J."/>
            <person name="Davila G."/>
        </authorList>
    </citation>
    <scope>NUCLEOTIDE SEQUENCE [LARGE SCALE GENOMIC DNA]</scope>
    <source>
        <strain>CIAT 652</strain>
    </source>
</reference>
<gene>
    <name type="ordered locus">RHECIAT_CH0001358</name>
</gene>
<name>Y1358_RHIE6</name>
<comment type="similarity">
    <text evidence="1">Belongs to the UPF0260 family.</text>
</comment>
<organism>
    <name type="scientific">Rhizobium etli (strain CIAT 652)</name>
    <dbReference type="NCBI Taxonomy" id="491916"/>
    <lineage>
        <taxon>Bacteria</taxon>
        <taxon>Pseudomonadati</taxon>
        <taxon>Pseudomonadota</taxon>
        <taxon>Alphaproteobacteria</taxon>
        <taxon>Hyphomicrobiales</taxon>
        <taxon>Rhizobiaceae</taxon>
        <taxon>Rhizobium/Agrobacterium group</taxon>
        <taxon>Rhizobium</taxon>
    </lineage>
</organism>
<proteinExistence type="inferred from homology"/>
<accession>B3PU35</accession>
<evidence type="ECO:0000255" key="1">
    <source>
        <dbReference type="HAMAP-Rule" id="MF_00676"/>
    </source>
</evidence>
<sequence>MNDLPFWKSKTLAEMTAPEWESLCDGCGLCCLNKLEEWDSGDIYFTSVSCKLLDGESCRCSSYENRWDFVPDCVQLTKENVPDIAWLPPTCGYRLINEGRDLYWWHPLVSGDPETVHAAGISARGRTISETEIDIEDLEDYVVDWPLTVGEEKDEEEA</sequence>